<gene>
    <name evidence="1" type="primary">valS</name>
    <name type="ordered locus">HP_1153</name>
</gene>
<sequence length="874" mass="101360">MIMKQEPTTYQPEEIEKKIYEICSHRGYFEIDGNEAIQEKNKRFCLMMPPPNVTGVLHIGHALTLSLQDILARYKRMDGYKTLYQPGLDHAGIATQNVVEKQLLSQGIKKEDLGREEFIKKVWEWKEKSGGAILEQMKRLGVSAAFSRTRFTMDKGLQRAVKLAFLKWYEKGLIIQDNYMVNWCTKDGALSDIEVEYEERKGALYYIRYYLENQKDYLVVATTRPETLFGDSALMVNPNDERYKHLVGQKAILPLIHRTIPIIADEHVEMEFGTGCVKVTPGHDFNDYEVGKRHHLETIKIFDEKGILNAHCGEFENLERLEARDKVVERLKENALLEKIEEHTHQVGHCYRCHNVVEPYVSKQWFVKPEIAQSSIEKIQQGLARFYPSNWINNYNAWMRELRPWCISRQLFWGHQIPVFTCENNHQFVSLDTPLSCPTCKSETLEQDKDVLDTWFSSGLWAFSTLGWGQEKSGLFNESDLKDFYPNTTLITGFDILFFWVARMLFCSESLLGELPFKDIYLHALVRDEKGEKMSKSKGNVIDPLEMIEKYGADSLRFTLANLCATGRDIKLSTTHLENNKNFANKLFNAASYLKLKQESFKDKERLNEYQTPLGRYAKSRLNSATKEARNALDNYRFNDATTLLYRFLWGEFCDWFIEFSKVENEAIDELGSVLKEALKLLHPFMPFISESLYHKLSNTELENTESIMVMPYPKDLAQDEKLEHEFEVIKDCIVSLRRLKIMLETPPIVLKEASVGLREAIENTERLQTYAQKLARLEKVSVISSKPLKSVSDVGEFCQTYANLENLDLSPLVARLKKQLEKLEKEKLKLNLHNENFVKNAPKSVLEKAKESLKTLLEKESKIKQELDLLEQP</sequence>
<name>SYV_HELPY</name>
<protein>
    <recommendedName>
        <fullName evidence="1">Valine--tRNA ligase</fullName>
        <ecNumber evidence="1">6.1.1.9</ecNumber>
    </recommendedName>
    <alternativeName>
        <fullName evidence="1">Valyl-tRNA synthetase</fullName>
        <shortName evidence="1">ValRS</shortName>
    </alternativeName>
</protein>
<accession>P56000</accession>
<comment type="function">
    <text evidence="1">Catalyzes the attachment of valine to tRNA(Val). As ValRS can inadvertently accommodate and process structurally similar amino acids such as threonine, to avoid such errors, it has a 'posttransfer' editing activity that hydrolyzes mischarged Thr-tRNA(Val) in a tRNA-dependent manner.</text>
</comment>
<comment type="catalytic activity">
    <reaction evidence="1">
        <text>tRNA(Val) + L-valine + ATP = L-valyl-tRNA(Val) + AMP + diphosphate</text>
        <dbReference type="Rhea" id="RHEA:10704"/>
        <dbReference type="Rhea" id="RHEA-COMP:9672"/>
        <dbReference type="Rhea" id="RHEA-COMP:9708"/>
        <dbReference type="ChEBI" id="CHEBI:30616"/>
        <dbReference type="ChEBI" id="CHEBI:33019"/>
        <dbReference type="ChEBI" id="CHEBI:57762"/>
        <dbReference type="ChEBI" id="CHEBI:78442"/>
        <dbReference type="ChEBI" id="CHEBI:78537"/>
        <dbReference type="ChEBI" id="CHEBI:456215"/>
        <dbReference type="EC" id="6.1.1.9"/>
    </reaction>
</comment>
<comment type="subunit">
    <text evidence="1">Monomer.</text>
</comment>
<comment type="subcellular location">
    <subcellularLocation>
        <location evidence="1">Cytoplasm</location>
    </subcellularLocation>
</comment>
<comment type="domain">
    <text evidence="1">ValRS has two distinct active sites: one for aminoacylation and one for editing. The misactivated threonine is translocated from the active site to the editing site.</text>
</comment>
<comment type="domain">
    <text evidence="1">The C-terminal coiled-coil domain is crucial for aminoacylation activity.</text>
</comment>
<comment type="similarity">
    <text evidence="1">Belongs to the class-I aminoacyl-tRNA synthetase family. ValS type 1 subfamily.</text>
</comment>
<keyword id="KW-0030">Aminoacyl-tRNA synthetase</keyword>
<keyword id="KW-0067">ATP-binding</keyword>
<keyword id="KW-0175">Coiled coil</keyword>
<keyword id="KW-0963">Cytoplasm</keyword>
<keyword id="KW-0436">Ligase</keyword>
<keyword id="KW-0547">Nucleotide-binding</keyword>
<keyword id="KW-0648">Protein biosynthesis</keyword>
<keyword id="KW-1185">Reference proteome</keyword>
<reference key="1">
    <citation type="journal article" date="1997" name="Nature">
        <title>The complete genome sequence of the gastric pathogen Helicobacter pylori.</title>
        <authorList>
            <person name="Tomb J.-F."/>
            <person name="White O."/>
            <person name="Kerlavage A.R."/>
            <person name="Clayton R.A."/>
            <person name="Sutton G.G."/>
            <person name="Fleischmann R.D."/>
            <person name="Ketchum K.A."/>
            <person name="Klenk H.-P."/>
            <person name="Gill S.R."/>
            <person name="Dougherty B.A."/>
            <person name="Nelson K.E."/>
            <person name="Quackenbush J."/>
            <person name="Zhou L."/>
            <person name="Kirkness E.F."/>
            <person name="Peterson S.N."/>
            <person name="Loftus B.J."/>
            <person name="Richardson D.L."/>
            <person name="Dodson R.J."/>
            <person name="Khalak H.G."/>
            <person name="Glodek A."/>
            <person name="McKenney K."/>
            <person name="FitzGerald L.M."/>
            <person name="Lee N."/>
            <person name="Adams M.D."/>
            <person name="Hickey E.K."/>
            <person name="Berg D.E."/>
            <person name="Gocayne J.D."/>
            <person name="Utterback T.R."/>
            <person name="Peterson J.D."/>
            <person name="Kelley J.M."/>
            <person name="Cotton M.D."/>
            <person name="Weidman J.F."/>
            <person name="Fujii C."/>
            <person name="Bowman C."/>
            <person name="Watthey L."/>
            <person name="Wallin E."/>
            <person name="Hayes W.S."/>
            <person name="Borodovsky M."/>
            <person name="Karp P.D."/>
            <person name="Smith H.O."/>
            <person name="Fraser C.M."/>
            <person name="Venter J.C."/>
        </authorList>
    </citation>
    <scope>NUCLEOTIDE SEQUENCE [LARGE SCALE GENOMIC DNA]</scope>
    <source>
        <strain>ATCC 700392 / 26695</strain>
    </source>
</reference>
<feature type="chain" id="PRO_0000106227" description="Valine--tRNA ligase">
    <location>
        <begin position="1"/>
        <end position="874"/>
    </location>
</feature>
<feature type="coiled-coil region" evidence="1">
    <location>
        <begin position="813"/>
        <end position="873"/>
    </location>
</feature>
<feature type="short sequence motif" description="'HIGH' region">
    <location>
        <begin position="51"/>
        <end position="61"/>
    </location>
</feature>
<feature type="short sequence motif" description="'KMSKS' region">
    <location>
        <begin position="533"/>
        <end position="537"/>
    </location>
</feature>
<feature type="binding site" evidence="1">
    <location>
        <position position="536"/>
    </location>
    <ligand>
        <name>ATP</name>
        <dbReference type="ChEBI" id="CHEBI:30616"/>
    </ligand>
</feature>
<proteinExistence type="inferred from homology"/>
<evidence type="ECO:0000255" key="1">
    <source>
        <dbReference type="HAMAP-Rule" id="MF_02004"/>
    </source>
</evidence>
<dbReference type="EC" id="6.1.1.9" evidence="1"/>
<dbReference type="EMBL" id="AE000511">
    <property type="protein sequence ID" value="AAD08195.1"/>
    <property type="molecule type" value="Genomic_DNA"/>
</dbReference>
<dbReference type="PIR" id="A64664">
    <property type="entry name" value="A64664"/>
</dbReference>
<dbReference type="RefSeq" id="NP_207944.1">
    <property type="nucleotide sequence ID" value="NC_000915.1"/>
</dbReference>
<dbReference type="SMR" id="P56000"/>
<dbReference type="FunCoup" id="P56000">
    <property type="interactions" value="364"/>
</dbReference>
<dbReference type="IntAct" id="P56000">
    <property type="interactions" value="1"/>
</dbReference>
<dbReference type="MINT" id="P56000"/>
<dbReference type="STRING" id="85962.HP_1153"/>
<dbReference type="PaxDb" id="85962-C694_05955"/>
<dbReference type="EnsemblBacteria" id="AAD08195">
    <property type="protein sequence ID" value="AAD08195"/>
    <property type="gene ID" value="HP_1153"/>
</dbReference>
<dbReference type="KEGG" id="hpy:HP_1153"/>
<dbReference type="PATRIC" id="fig|85962.8.peg.1207"/>
<dbReference type="eggNOG" id="COG0525">
    <property type="taxonomic scope" value="Bacteria"/>
</dbReference>
<dbReference type="InParanoid" id="P56000"/>
<dbReference type="OrthoDB" id="9810365at2"/>
<dbReference type="PhylomeDB" id="P56000"/>
<dbReference type="Proteomes" id="UP000000429">
    <property type="component" value="Chromosome"/>
</dbReference>
<dbReference type="GO" id="GO:0005829">
    <property type="term" value="C:cytosol"/>
    <property type="evidence" value="ECO:0000318"/>
    <property type="project" value="GO_Central"/>
</dbReference>
<dbReference type="GO" id="GO:0002161">
    <property type="term" value="F:aminoacyl-tRNA deacylase activity"/>
    <property type="evidence" value="ECO:0007669"/>
    <property type="project" value="InterPro"/>
</dbReference>
<dbReference type="GO" id="GO:0005524">
    <property type="term" value="F:ATP binding"/>
    <property type="evidence" value="ECO:0007669"/>
    <property type="project" value="UniProtKB-UniRule"/>
</dbReference>
<dbReference type="GO" id="GO:0004832">
    <property type="term" value="F:valine-tRNA ligase activity"/>
    <property type="evidence" value="ECO:0000318"/>
    <property type="project" value="GO_Central"/>
</dbReference>
<dbReference type="GO" id="GO:0006438">
    <property type="term" value="P:valyl-tRNA aminoacylation"/>
    <property type="evidence" value="ECO:0000318"/>
    <property type="project" value="GO_Central"/>
</dbReference>
<dbReference type="CDD" id="cd07962">
    <property type="entry name" value="Anticodon_Ia_Val"/>
    <property type="match status" value="1"/>
</dbReference>
<dbReference type="CDD" id="cd00817">
    <property type="entry name" value="ValRS_core"/>
    <property type="match status" value="1"/>
</dbReference>
<dbReference type="FunFam" id="3.40.50.620:FF:000219">
    <property type="entry name" value="Valine--tRNA ligase"/>
    <property type="match status" value="1"/>
</dbReference>
<dbReference type="FunFam" id="3.40.50.620:FF:000382">
    <property type="entry name" value="Valine--tRNA ligase"/>
    <property type="match status" value="1"/>
</dbReference>
<dbReference type="FunFam" id="3.90.740.10:FF:000005">
    <property type="entry name" value="Valine--tRNA ligase, mitochondrial"/>
    <property type="match status" value="1"/>
</dbReference>
<dbReference type="Gene3D" id="2.170.220.10">
    <property type="match status" value="1"/>
</dbReference>
<dbReference type="Gene3D" id="3.40.50.620">
    <property type="entry name" value="HUPs"/>
    <property type="match status" value="2"/>
</dbReference>
<dbReference type="Gene3D" id="1.10.730.10">
    <property type="entry name" value="Isoleucyl-tRNA Synthetase, Domain 1"/>
    <property type="match status" value="1"/>
</dbReference>
<dbReference type="Gene3D" id="1.10.287.380">
    <property type="entry name" value="Valyl-tRNA synthetase, C-terminal domain"/>
    <property type="match status" value="1"/>
</dbReference>
<dbReference type="Gene3D" id="3.90.740.10">
    <property type="entry name" value="Valyl/Leucyl/Isoleucyl-tRNA synthetase, editing domain"/>
    <property type="match status" value="1"/>
</dbReference>
<dbReference type="HAMAP" id="MF_02004">
    <property type="entry name" value="Val_tRNA_synth_type1"/>
    <property type="match status" value="1"/>
</dbReference>
<dbReference type="InterPro" id="IPR001412">
    <property type="entry name" value="aa-tRNA-synth_I_CS"/>
</dbReference>
<dbReference type="InterPro" id="IPR002300">
    <property type="entry name" value="aa-tRNA-synth_Ia"/>
</dbReference>
<dbReference type="InterPro" id="IPR033705">
    <property type="entry name" value="Anticodon_Ia_Val"/>
</dbReference>
<dbReference type="InterPro" id="IPR013155">
    <property type="entry name" value="M/V/L/I-tRNA-synth_anticd-bd"/>
</dbReference>
<dbReference type="InterPro" id="IPR014729">
    <property type="entry name" value="Rossmann-like_a/b/a_fold"/>
</dbReference>
<dbReference type="InterPro" id="IPR010978">
    <property type="entry name" value="tRNA-bd_arm"/>
</dbReference>
<dbReference type="InterPro" id="IPR009080">
    <property type="entry name" value="tRNAsynth_Ia_anticodon-bd"/>
</dbReference>
<dbReference type="InterPro" id="IPR037118">
    <property type="entry name" value="Val-tRNA_synth_C_sf"/>
</dbReference>
<dbReference type="InterPro" id="IPR019499">
    <property type="entry name" value="Val-tRNA_synth_tRNA-bd"/>
</dbReference>
<dbReference type="InterPro" id="IPR009008">
    <property type="entry name" value="Val/Leu/Ile-tRNA-synth_edit"/>
</dbReference>
<dbReference type="InterPro" id="IPR002303">
    <property type="entry name" value="Valyl-tRNA_ligase"/>
</dbReference>
<dbReference type="NCBIfam" id="NF004349">
    <property type="entry name" value="PRK05729.1"/>
    <property type="match status" value="1"/>
</dbReference>
<dbReference type="NCBIfam" id="TIGR00422">
    <property type="entry name" value="valS"/>
    <property type="match status" value="1"/>
</dbReference>
<dbReference type="PANTHER" id="PTHR11946:SF93">
    <property type="entry name" value="VALINE--TRNA LIGASE, CHLOROPLASTIC_MITOCHONDRIAL 2"/>
    <property type="match status" value="1"/>
</dbReference>
<dbReference type="PANTHER" id="PTHR11946">
    <property type="entry name" value="VALYL-TRNA SYNTHETASES"/>
    <property type="match status" value="1"/>
</dbReference>
<dbReference type="Pfam" id="PF08264">
    <property type="entry name" value="Anticodon_1"/>
    <property type="match status" value="1"/>
</dbReference>
<dbReference type="Pfam" id="PF00133">
    <property type="entry name" value="tRNA-synt_1"/>
    <property type="match status" value="1"/>
</dbReference>
<dbReference type="Pfam" id="PF10458">
    <property type="entry name" value="Val_tRNA-synt_C"/>
    <property type="match status" value="1"/>
</dbReference>
<dbReference type="PRINTS" id="PR00986">
    <property type="entry name" value="TRNASYNTHVAL"/>
</dbReference>
<dbReference type="SUPFAM" id="SSF47323">
    <property type="entry name" value="Anticodon-binding domain of a subclass of class I aminoacyl-tRNA synthetases"/>
    <property type="match status" value="1"/>
</dbReference>
<dbReference type="SUPFAM" id="SSF52374">
    <property type="entry name" value="Nucleotidylyl transferase"/>
    <property type="match status" value="1"/>
</dbReference>
<dbReference type="SUPFAM" id="SSF46589">
    <property type="entry name" value="tRNA-binding arm"/>
    <property type="match status" value="1"/>
</dbReference>
<dbReference type="SUPFAM" id="SSF50677">
    <property type="entry name" value="ValRS/IleRS/LeuRS editing domain"/>
    <property type="match status" value="1"/>
</dbReference>
<dbReference type="PROSITE" id="PS00178">
    <property type="entry name" value="AA_TRNA_LIGASE_I"/>
    <property type="match status" value="1"/>
</dbReference>
<organism>
    <name type="scientific">Helicobacter pylori (strain ATCC 700392 / 26695)</name>
    <name type="common">Campylobacter pylori</name>
    <dbReference type="NCBI Taxonomy" id="85962"/>
    <lineage>
        <taxon>Bacteria</taxon>
        <taxon>Pseudomonadati</taxon>
        <taxon>Campylobacterota</taxon>
        <taxon>Epsilonproteobacteria</taxon>
        <taxon>Campylobacterales</taxon>
        <taxon>Helicobacteraceae</taxon>
        <taxon>Helicobacter</taxon>
    </lineage>
</organism>